<organism>
    <name type="scientific">Bordetella pertussis (strain Tohama I / ATCC BAA-589 / NCTC 13251)</name>
    <dbReference type="NCBI Taxonomy" id="257313"/>
    <lineage>
        <taxon>Bacteria</taxon>
        <taxon>Pseudomonadati</taxon>
        <taxon>Pseudomonadota</taxon>
        <taxon>Betaproteobacteria</taxon>
        <taxon>Burkholderiales</taxon>
        <taxon>Alcaligenaceae</taxon>
        <taxon>Bordetella</taxon>
    </lineage>
</organism>
<keyword id="KW-0963">Cytoplasm</keyword>
<keyword id="KW-0227">DNA damage</keyword>
<keyword id="KW-0233">DNA recombination</keyword>
<keyword id="KW-0234">DNA repair</keyword>
<keyword id="KW-0238">DNA-binding</keyword>
<keyword id="KW-0255">Endonuclease</keyword>
<keyword id="KW-0378">Hydrolase</keyword>
<keyword id="KW-0460">Magnesium</keyword>
<keyword id="KW-0479">Metal-binding</keyword>
<keyword id="KW-0540">Nuclease</keyword>
<keyword id="KW-1185">Reference proteome</keyword>
<name>RUVC_BORPE</name>
<proteinExistence type="inferred from homology"/>
<comment type="function">
    <text evidence="1">The RuvA-RuvB-RuvC complex processes Holliday junction (HJ) DNA during genetic recombination and DNA repair. Endonuclease that resolves HJ intermediates. Cleaves cruciform DNA by making single-stranded nicks across the HJ at symmetrical positions within the homologous arms, yielding a 5'-phosphate and a 3'-hydroxyl group; requires a central core of homology in the junction. The consensus cleavage sequence is 5'-(A/T)TT(C/G)-3'. Cleavage occurs on the 3'-side of the TT dinucleotide at the point of strand exchange. HJ branch migration catalyzed by RuvA-RuvB allows RuvC to scan DNA until it finds its consensus sequence, where it cleaves and resolves the cruciform DNA.</text>
</comment>
<comment type="catalytic activity">
    <reaction evidence="1">
        <text>Endonucleolytic cleavage at a junction such as a reciprocal single-stranded crossover between two homologous DNA duplexes (Holliday junction).</text>
        <dbReference type="EC" id="3.1.21.10"/>
    </reaction>
</comment>
<comment type="cofactor">
    <cofactor evidence="1">
        <name>Mg(2+)</name>
        <dbReference type="ChEBI" id="CHEBI:18420"/>
    </cofactor>
    <text evidence="1">Binds 2 Mg(2+) ion per subunit.</text>
</comment>
<comment type="subunit">
    <text evidence="1">Homodimer which binds Holliday junction (HJ) DNA. The HJ becomes 2-fold symmetrical on binding to RuvC with unstacked arms; it has a different conformation from HJ DNA in complex with RuvA. In the full resolvosome a probable DNA-RuvA(4)-RuvB(12)-RuvC(2) complex forms which resolves the HJ.</text>
</comment>
<comment type="subcellular location">
    <subcellularLocation>
        <location evidence="1">Cytoplasm</location>
    </subcellularLocation>
</comment>
<comment type="similarity">
    <text evidence="1">Belongs to the RuvC family.</text>
</comment>
<reference key="1">
    <citation type="journal article" date="2003" name="Nat. Genet.">
        <title>Comparative analysis of the genome sequences of Bordetella pertussis, Bordetella parapertussis and Bordetella bronchiseptica.</title>
        <authorList>
            <person name="Parkhill J."/>
            <person name="Sebaihia M."/>
            <person name="Preston A."/>
            <person name="Murphy L.D."/>
            <person name="Thomson N.R."/>
            <person name="Harris D.E."/>
            <person name="Holden M.T.G."/>
            <person name="Churcher C.M."/>
            <person name="Bentley S.D."/>
            <person name="Mungall K.L."/>
            <person name="Cerdeno-Tarraga A.-M."/>
            <person name="Temple L."/>
            <person name="James K.D."/>
            <person name="Harris B."/>
            <person name="Quail M.A."/>
            <person name="Achtman M."/>
            <person name="Atkin R."/>
            <person name="Baker S."/>
            <person name="Basham D."/>
            <person name="Bason N."/>
            <person name="Cherevach I."/>
            <person name="Chillingworth T."/>
            <person name="Collins M."/>
            <person name="Cronin A."/>
            <person name="Davis P."/>
            <person name="Doggett J."/>
            <person name="Feltwell T."/>
            <person name="Goble A."/>
            <person name="Hamlin N."/>
            <person name="Hauser H."/>
            <person name="Holroyd S."/>
            <person name="Jagels K."/>
            <person name="Leather S."/>
            <person name="Moule S."/>
            <person name="Norberczak H."/>
            <person name="O'Neil S."/>
            <person name="Ormond D."/>
            <person name="Price C."/>
            <person name="Rabbinowitsch E."/>
            <person name="Rutter S."/>
            <person name="Sanders M."/>
            <person name="Saunders D."/>
            <person name="Seeger K."/>
            <person name="Sharp S."/>
            <person name="Simmonds M."/>
            <person name="Skelton J."/>
            <person name="Squares R."/>
            <person name="Squares S."/>
            <person name="Stevens K."/>
            <person name="Unwin L."/>
            <person name="Whitehead S."/>
            <person name="Barrell B.G."/>
            <person name="Maskell D.J."/>
        </authorList>
    </citation>
    <scope>NUCLEOTIDE SEQUENCE [LARGE SCALE GENOMIC DNA]</scope>
    <source>
        <strain>Tohama I / ATCC BAA-589 / NCTC 13251</strain>
    </source>
</reference>
<accession>Q7VTU0</accession>
<protein>
    <recommendedName>
        <fullName evidence="1">Crossover junction endodeoxyribonuclease RuvC</fullName>
        <ecNumber evidence="1">3.1.21.10</ecNumber>
    </recommendedName>
    <alternativeName>
        <fullName evidence="1">Holliday junction nuclease RuvC</fullName>
    </alternativeName>
    <alternativeName>
        <fullName evidence="1">Holliday junction resolvase RuvC</fullName>
    </alternativeName>
</protein>
<feature type="chain" id="PRO_0000183079" description="Crossover junction endodeoxyribonuclease RuvC">
    <location>
        <begin position="1"/>
        <end position="182"/>
    </location>
</feature>
<feature type="active site" evidence="1">
    <location>
        <position position="7"/>
    </location>
</feature>
<feature type="active site" evidence="1">
    <location>
        <position position="67"/>
    </location>
</feature>
<feature type="active site" evidence="1">
    <location>
        <position position="139"/>
    </location>
</feature>
<feature type="binding site" evidence="1">
    <location>
        <position position="7"/>
    </location>
    <ligand>
        <name>Mg(2+)</name>
        <dbReference type="ChEBI" id="CHEBI:18420"/>
        <label>1</label>
    </ligand>
</feature>
<feature type="binding site" evidence="1">
    <location>
        <position position="67"/>
    </location>
    <ligand>
        <name>Mg(2+)</name>
        <dbReference type="ChEBI" id="CHEBI:18420"/>
        <label>2</label>
    </ligand>
</feature>
<feature type="binding site" evidence="1">
    <location>
        <position position="139"/>
    </location>
    <ligand>
        <name>Mg(2+)</name>
        <dbReference type="ChEBI" id="CHEBI:18420"/>
        <label>1</label>
    </ligand>
</feature>
<dbReference type="EC" id="3.1.21.10" evidence="1"/>
<dbReference type="EMBL" id="BX640421">
    <property type="protein sequence ID" value="CAE43680.1"/>
    <property type="molecule type" value="Genomic_DNA"/>
</dbReference>
<dbReference type="RefSeq" id="NP_881944.1">
    <property type="nucleotide sequence ID" value="NC_002929.2"/>
</dbReference>
<dbReference type="RefSeq" id="WP_010931465.1">
    <property type="nucleotide sequence ID" value="NZ_CP039022.1"/>
</dbReference>
<dbReference type="SMR" id="Q7VTU0"/>
<dbReference type="STRING" id="257313.BP3417"/>
<dbReference type="PaxDb" id="257313-BP3417"/>
<dbReference type="GeneID" id="69600591"/>
<dbReference type="KEGG" id="bpe:BP3417"/>
<dbReference type="PATRIC" id="fig|257313.5.peg.3701"/>
<dbReference type="eggNOG" id="COG0817">
    <property type="taxonomic scope" value="Bacteria"/>
</dbReference>
<dbReference type="HOGENOM" id="CLU_091257_2_1_4"/>
<dbReference type="Proteomes" id="UP000002676">
    <property type="component" value="Chromosome"/>
</dbReference>
<dbReference type="GO" id="GO:0005737">
    <property type="term" value="C:cytoplasm"/>
    <property type="evidence" value="ECO:0007669"/>
    <property type="project" value="UniProtKB-SubCell"/>
</dbReference>
<dbReference type="GO" id="GO:0048476">
    <property type="term" value="C:Holliday junction resolvase complex"/>
    <property type="evidence" value="ECO:0007669"/>
    <property type="project" value="UniProtKB-UniRule"/>
</dbReference>
<dbReference type="GO" id="GO:0008821">
    <property type="term" value="F:crossover junction DNA endonuclease activity"/>
    <property type="evidence" value="ECO:0007669"/>
    <property type="project" value="UniProtKB-UniRule"/>
</dbReference>
<dbReference type="GO" id="GO:0003677">
    <property type="term" value="F:DNA binding"/>
    <property type="evidence" value="ECO:0007669"/>
    <property type="project" value="UniProtKB-KW"/>
</dbReference>
<dbReference type="GO" id="GO:0000287">
    <property type="term" value="F:magnesium ion binding"/>
    <property type="evidence" value="ECO:0007669"/>
    <property type="project" value="UniProtKB-UniRule"/>
</dbReference>
<dbReference type="GO" id="GO:0006310">
    <property type="term" value="P:DNA recombination"/>
    <property type="evidence" value="ECO:0007669"/>
    <property type="project" value="UniProtKB-UniRule"/>
</dbReference>
<dbReference type="GO" id="GO:0006281">
    <property type="term" value="P:DNA repair"/>
    <property type="evidence" value="ECO:0007669"/>
    <property type="project" value="UniProtKB-UniRule"/>
</dbReference>
<dbReference type="CDD" id="cd16962">
    <property type="entry name" value="RuvC"/>
    <property type="match status" value="1"/>
</dbReference>
<dbReference type="FunFam" id="3.30.420.10:FF:000002">
    <property type="entry name" value="Crossover junction endodeoxyribonuclease RuvC"/>
    <property type="match status" value="1"/>
</dbReference>
<dbReference type="Gene3D" id="3.30.420.10">
    <property type="entry name" value="Ribonuclease H-like superfamily/Ribonuclease H"/>
    <property type="match status" value="1"/>
</dbReference>
<dbReference type="HAMAP" id="MF_00034">
    <property type="entry name" value="RuvC"/>
    <property type="match status" value="1"/>
</dbReference>
<dbReference type="InterPro" id="IPR012337">
    <property type="entry name" value="RNaseH-like_sf"/>
</dbReference>
<dbReference type="InterPro" id="IPR036397">
    <property type="entry name" value="RNaseH_sf"/>
</dbReference>
<dbReference type="InterPro" id="IPR020563">
    <property type="entry name" value="X-over_junc_endoDNase_Mg_BS"/>
</dbReference>
<dbReference type="InterPro" id="IPR002176">
    <property type="entry name" value="X-over_junc_endoDNase_RuvC"/>
</dbReference>
<dbReference type="NCBIfam" id="TIGR00228">
    <property type="entry name" value="ruvC"/>
    <property type="match status" value="1"/>
</dbReference>
<dbReference type="PANTHER" id="PTHR30194">
    <property type="entry name" value="CROSSOVER JUNCTION ENDODEOXYRIBONUCLEASE RUVC"/>
    <property type="match status" value="1"/>
</dbReference>
<dbReference type="PANTHER" id="PTHR30194:SF3">
    <property type="entry name" value="CROSSOVER JUNCTION ENDODEOXYRIBONUCLEASE RUVC"/>
    <property type="match status" value="1"/>
</dbReference>
<dbReference type="Pfam" id="PF02075">
    <property type="entry name" value="RuvC"/>
    <property type="match status" value="1"/>
</dbReference>
<dbReference type="PRINTS" id="PR00696">
    <property type="entry name" value="RSOLVASERUVC"/>
</dbReference>
<dbReference type="SUPFAM" id="SSF53098">
    <property type="entry name" value="Ribonuclease H-like"/>
    <property type="match status" value="1"/>
</dbReference>
<dbReference type="PROSITE" id="PS01321">
    <property type="entry name" value="RUVC"/>
    <property type="match status" value="1"/>
</dbReference>
<gene>
    <name evidence="1" type="primary">ruvC</name>
    <name type="ordered locus">BP3417</name>
</gene>
<evidence type="ECO:0000255" key="1">
    <source>
        <dbReference type="HAMAP-Rule" id="MF_00034"/>
    </source>
</evidence>
<sequence length="182" mass="19343">MRVLGIDPGLRRTGFGVIDAEGMRLRYVASGTIVVPPALALPERLKVILDNLREVARETRPDVAALEIVFLNTNPASTLLLGQARGAALCALADSALDVHEYTALQIKKAVMGTGRAAKEQVQMMVQRLLSLDGTPAPDSADALACAICHAHVGPLHDKLDRLGTAAQLGSRPRLRNGRLVG</sequence>